<accession>B7M2I4</accession>
<reference key="1">
    <citation type="journal article" date="2009" name="PLoS Genet.">
        <title>Organised genome dynamics in the Escherichia coli species results in highly diverse adaptive paths.</title>
        <authorList>
            <person name="Touchon M."/>
            <person name="Hoede C."/>
            <person name="Tenaillon O."/>
            <person name="Barbe V."/>
            <person name="Baeriswyl S."/>
            <person name="Bidet P."/>
            <person name="Bingen E."/>
            <person name="Bonacorsi S."/>
            <person name="Bouchier C."/>
            <person name="Bouvet O."/>
            <person name="Calteau A."/>
            <person name="Chiapello H."/>
            <person name="Clermont O."/>
            <person name="Cruveiller S."/>
            <person name="Danchin A."/>
            <person name="Diard M."/>
            <person name="Dossat C."/>
            <person name="Karoui M.E."/>
            <person name="Frapy E."/>
            <person name="Garry L."/>
            <person name="Ghigo J.M."/>
            <person name="Gilles A.M."/>
            <person name="Johnson J."/>
            <person name="Le Bouguenec C."/>
            <person name="Lescat M."/>
            <person name="Mangenot S."/>
            <person name="Martinez-Jehanne V."/>
            <person name="Matic I."/>
            <person name="Nassif X."/>
            <person name="Oztas S."/>
            <person name="Petit M.A."/>
            <person name="Pichon C."/>
            <person name="Rouy Z."/>
            <person name="Ruf C.S."/>
            <person name="Schneider D."/>
            <person name="Tourret J."/>
            <person name="Vacherie B."/>
            <person name="Vallenet D."/>
            <person name="Medigue C."/>
            <person name="Rocha E.P.C."/>
            <person name="Denamur E."/>
        </authorList>
    </citation>
    <scope>NUCLEOTIDE SEQUENCE [LARGE SCALE GENOMIC DNA]</scope>
    <source>
        <strain>IAI1</strain>
    </source>
</reference>
<proteinExistence type="inferred from homology"/>
<name>GLPG_ECO8A</name>
<sequence>MLMITSFANPRVAQAFVDYMATQGVILTIQQHNQSDVWLADESQAERVRAELARFLENPADPRYLAASWQAGHTGSGLHYRRYPFFAALRERAGPVTWVVMIACVVVFIAMQILGDQEVMLWLAWPFDPTLKFEFWRYFTHALMHFSLMHILFNLLWWWYLGGAVEKRLGSGKLIVITLISALLSGYVQQKFSGPWFGGLSGVVYALMGYVWLRGERDPQSGIYLQRGLIIFALIWIVAGWFDLFGMSMANGAHIAGLAVGLAMAFVDSLNARKRK</sequence>
<keyword id="KW-0997">Cell inner membrane</keyword>
<keyword id="KW-1003">Cell membrane</keyword>
<keyword id="KW-0378">Hydrolase</keyword>
<keyword id="KW-0472">Membrane</keyword>
<keyword id="KW-0645">Protease</keyword>
<keyword id="KW-0720">Serine protease</keyword>
<keyword id="KW-0812">Transmembrane</keyword>
<keyword id="KW-1133">Transmembrane helix</keyword>
<protein>
    <recommendedName>
        <fullName evidence="1">Rhomboid protease GlpG</fullName>
        <ecNumber evidence="1">3.4.21.105</ecNumber>
    </recommendedName>
    <alternativeName>
        <fullName evidence="1">Intramembrane serine protease</fullName>
    </alternativeName>
</protein>
<dbReference type="EC" id="3.4.21.105" evidence="1"/>
<dbReference type="EMBL" id="CU928160">
    <property type="protein sequence ID" value="CAR00366.1"/>
    <property type="molecule type" value="Genomic_DNA"/>
</dbReference>
<dbReference type="RefSeq" id="WP_000928731.1">
    <property type="nucleotide sequence ID" value="NC_011741.1"/>
</dbReference>
<dbReference type="SMR" id="B7M2I4"/>
<dbReference type="MEROPS" id="S54.016"/>
<dbReference type="GeneID" id="75202266"/>
<dbReference type="KEGG" id="ecr:ECIAI1_3567"/>
<dbReference type="HOGENOM" id="CLU_058989_0_0_6"/>
<dbReference type="GO" id="GO:0005886">
    <property type="term" value="C:plasma membrane"/>
    <property type="evidence" value="ECO:0007669"/>
    <property type="project" value="UniProtKB-SubCell"/>
</dbReference>
<dbReference type="GO" id="GO:0004252">
    <property type="term" value="F:serine-type endopeptidase activity"/>
    <property type="evidence" value="ECO:0007669"/>
    <property type="project" value="UniProtKB-UniRule"/>
</dbReference>
<dbReference type="GO" id="GO:0006508">
    <property type="term" value="P:proteolysis"/>
    <property type="evidence" value="ECO:0007669"/>
    <property type="project" value="UniProtKB-UniRule"/>
</dbReference>
<dbReference type="FunFam" id="1.20.1540.10:FF:000003">
    <property type="entry name" value="Rhomboid protease GlpG"/>
    <property type="match status" value="1"/>
</dbReference>
<dbReference type="FunFam" id="3.30.70.2350:FF:000001">
    <property type="entry name" value="Rhomboid protease GlpG"/>
    <property type="match status" value="1"/>
</dbReference>
<dbReference type="Gene3D" id="3.30.70.2350">
    <property type="match status" value="1"/>
</dbReference>
<dbReference type="Gene3D" id="1.20.1540.10">
    <property type="entry name" value="Rhomboid-like"/>
    <property type="match status" value="1"/>
</dbReference>
<dbReference type="HAMAP" id="MF_01594">
    <property type="entry name" value="Rhomboid_GlpG"/>
    <property type="match status" value="1"/>
</dbReference>
<dbReference type="InterPro" id="IPR038236">
    <property type="entry name" value="GlpG_N_sf"/>
</dbReference>
<dbReference type="InterPro" id="IPR022732">
    <property type="entry name" value="Peptidase_S54_GlpG_N"/>
</dbReference>
<dbReference type="InterPro" id="IPR022764">
    <property type="entry name" value="Peptidase_S54_rhomboid_dom"/>
</dbReference>
<dbReference type="InterPro" id="IPR035952">
    <property type="entry name" value="Rhomboid-like_sf"/>
</dbReference>
<dbReference type="InterPro" id="IPR023662">
    <property type="entry name" value="Rhomboid_protease_GlpG"/>
</dbReference>
<dbReference type="NCBIfam" id="NF008155">
    <property type="entry name" value="PRK10907.1"/>
    <property type="match status" value="1"/>
</dbReference>
<dbReference type="NCBIfam" id="TIGR04239">
    <property type="entry name" value="rhombo_GlpG"/>
    <property type="match status" value="1"/>
</dbReference>
<dbReference type="PANTHER" id="PTHR43066:SF26">
    <property type="entry name" value="RHOMBOID PROTEASE GLPG"/>
    <property type="match status" value="1"/>
</dbReference>
<dbReference type="PANTHER" id="PTHR43066">
    <property type="entry name" value="RHOMBOID-RELATED PROTEIN"/>
    <property type="match status" value="1"/>
</dbReference>
<dbReference type="Pfam" id="PF01694">
    <property type="entry name" value="Rhomboid"/>
    <property type="match status" value="1"/>
</dbReference>
<dbReference type="Pfam" id="PF12122">
    <property type="entry name" value="Rhomboid_N"/>
    <property type="match status" value="1"/>
</dbReference>
<dbReference type="SUPFAM" id="SSF144091">
    <property type="entry name" value="Rhomboid-like"/>
    <property type="match status" value="1"/>
</dbReference>
<comment type="function">
    <text evidence="1">Rhomboid-type serine protease that catalyzes intramembrane proteolysis.</text>
</comment>
<comment type="catalytic activity">
    <reaction evidence="1">
        <text>Cleaves type-1 transmembrane domains using a catalytic dyad composed of serine and histidine that are contributed by different transmembrane domains.</text>
        <dbReference type="EC" id="3.4.21.105"/>
    </reaction>
</comment>
<comment type="subcellular location">
    <subcellularLocation>
        <location evidence="1">Cell inner membrane</location>
        <topology evidence="1">Multi-pass membrane protein</topology>
    </subcellularLocation>
</comment>
<comment type="similarity">
    <text evidence="1">Belongs to the peptidase S54 family.</text>
</comment>
<feature type="chain" id="PRO_1000147855" description="Rhomboid protease GlpG">
    <location>
        <begin position="1"/>
        <end position="276"/>
    </location>
</feature>
<feature type="transmembrane region" description="Helical" evidence="1">
    <location>
        <begin position="94"/>
        <end position="114"/>
    </location>
</feature>
<feature type="transmembrane region" description="Helical" evidence="1">
    <location>
        <begin position="142"/>
        <end position="162"/>
    </location>
</feature>
<feature type="transmembrane region" description="Helical" evidence="1">
    <location>
        <begin position="169"/>
        <end position="189"/>
    </location>
</feature>
<feature type="transmembrane region" description="Helical" evidence="1">
    <location>
        <begin position="192"/>
        <end position="212"/>
    </location>
</feature>
<feature type="transmembrane region" description="Helical" evidence="1">
    <location>
        <begin position="229"/>
        <end position="249"/>
    </location>
</feature>
<feature type="transmembrane region" description="Helical" evidence="1">
    <location>
        <begin position="250"/>
        <end position="270"/>
    </location>
</feature>
<feature type="active site" description="Nucleophile" evidence="1">
    <location>
        <position position="201"/>
    </location>
</feature>
<feature type="active site" evidence="1">
    <location>
        <position position="254"/>
    </location>
</feature>
<gene>
    <name evidence="1" type="primary">glpG</name>
    <name type="ordered locus">ECIAI1_3567</name>
</gene>
<organism>
    <name type="scientific">Escherichia coli O8 (strain IAI1)</name>
    <dbReference type="NCBI Taxonomy" id="585034"/>
    <lineage>
        <taxon>Bacteria</taxon>
        <taxon>Pseudomonadati</taxon>
        <taxon>Pseudomonadota</taxon>
        <taxon>Gammaproteobacteria</taxon>
        <taxon>Enterobacterales</taxon>
        <taxon>Enterobacteriaceae</taxon>
        <taxon>Escherichia</taxon>
    </lineage>
</organism>
<evidence type="ECO:0000255" key="1">
    <source>
        <dbReference type="HAMAP-Rule" id="MF_01594"/>
    </source>
</evidence>